<name>Y257_AQUAE</name>
<feature type="chain" id="PRO_0000161945" description="Uncharacterized RNA methyltransferase aq_257">
    <location>
        <begin position="1"/>
        <end position="425"/>
    </location>
</feature>
<feature type="domain" description="TRAM" evidence="2">
    <location>
        <begin position="1"/>
        <end position="57"/>
    </location>
</feature>
<feature type="active site" description="Nucleophile" evidence="3">
    <location>
        <position position="381"/>
    </location>
</feature>
<feature type="binding site" evidence="1">
    <location>
        <position position="70"/>
    </location>
    <ligand>
        <name>[4Fe-4S] cluster</name>
        <dbReference type="ChEBI" id="CHEBI:49883"/>
    </ligand>
</feature>
<feature type="binding site" evidence="1">
    <location>
        <position position="76"/>
    </location>
    <ligand>
        <name>[4Fe-4S] cluster</name>
        <dbReference type="ChEBI" id="CHEBI:49883"/>
    </ligand>
</feature>
<feature type="binding site" evidence="1">
    <location>
        <position position="79"/>
    </location>
    <ligand>
        <name>[4Fe-4S] cluster</name>
        <dbReference type="ChEBI" id="CHEBI:49883"/>
    </ligand>
</feature>
<feature type="binding site" evidence="1">
    <location>
        <position position="153"/>
    </location>
    <ligand>
        <name>[4Fe-4S] cluster</name>
        <dbReference type="ChEBI" id="CHEBI:49883"/>
    </ligand>
</feature>
<feature type="binding site" evidence="3">
    <location>
        <position position="260"/>
    </location>
    <ligand>
        <name>S-adenosyl-L-methionine</name>
        <dbReference type="ChEBI" id="CHEBI:59789"/>
    </ligand>
</feature>
<feature type="binding site" evidence="3">
    <location>
        <position position="308"/>
    </location>
    <ligand>
        <name>S-adenosyl-L-methionine</name>
        <dbReference type="ChEBI" id="CHEBI:59789"/>
    </ligand>
</feature>
<feature type="binding site" evidence="3">
    <location>
        <position position="354"/>
    </location>
    <ligand>
        <name>S-adenosyl-L-methionine</name>
        <dbReference type="ChEBI" id="CHEBI:59789"/>
    </ligand>
</feature>
<protein>
    <recommendedName>
        <fullName>Uncharacterized RNA methyltransferase aq_257</fullName>
        <ecNumber>2.1.1.-</ecNumber>
    </recommendedName>
</protein>
<reference key="1">
    <citation type="journal article" date="1998" name="Nature">
        <title>The complete genome of the hyperthermophilic bacterium Aquifex aeolicus.</title>
        <authorList>
            <person name="Deckert G."/>
            <person name="Warren P.V."/>
            <person name="Gaasterland T."/>
            <person name="Young W.G."/>
            <person name="Lenox A.L."/>
            <person name="Graham D.E."/>
            <person name="Overbeek R."/>
            <person name="Snead M.A."/>
            <person name="Keller M."/>
            <person name="Aujay M."/>
            <person name="Huber R."/>
            <person name="Feldman R.A."/>
            <person name="Short J.M."/>
            <person name="Olsen G.J."/>
            <person name="Swanson R.V."/>
        </authorList>
    </citation>
    <scope>NUCLEOTIDE SEQUENCE [LARGE SCALE GENOMIC DNA]</scope>
    <source>
        <strain>VF5</strain>
    </source>
</reference>
<comment type="similarity">
    <text evidence="3">Belongs to the class I-like SAM-binding methyltransferase superfamily. RNA M5U methyltransferase family.</text>
</comment>
<proteinExistence type="inferred from homology"/>
<gene>
    <name type="ordered locus">aq_257</name>
</gene>
<evidence type="ECO:0000250" key="1"/>
<evidence type="ECO:0000255" key="2">
    <source>
        <dbReference type="PROSITE-ProRule" id="PRU00208"/>
    </source>
</evidence>
<evidence type="ECO:0000255" key="3">
    <source>
        <dbReference type="PROSITE-ProRule" id="PRU01024"/>
    </source>
</evidence>
<dbReference type="EC" id="2.1.1.-"/>
<dbReference type="EMBL" id="AE000657">
    <property type="protein sequence ID" value="AAC06582.1"/>
    <property type="molecule type" value="Genomic_DNA"/>
</dbReference>
<dbReference type="PIR" id="E70323">
    <property type="entry name" value="E70323"/>
</dbReference>
<dbReference type="RefSeq" id="NP_213177.1">
    <property type="nucleotide sequence ID" value="NC_000918.1"/>
</dbReference>
<dbReference type="RefSeq" id="WP_010880115.1">
    <property type="nucleotide sequence ID" value="NC_000918.1"/>
</dbReference>
<dbReference type="SMR" id="O66617"/>
<dbReference type="FunCoup" id="O66617">
    <property type="interactions" value="365"/>
</dbReference>
<dbReference type="STRING" id="224324.aq_257"/>
<dbReference type="DNASU" id="1192851"/>
<dbReference type="EnsemblBacteria" id="AAC06582">
    <property type="protein sequence ID" value="AAC06582"/>
    <property type="gene ID" value="aq_257"/>
</dbReference>
<dbReference type="KEGG" id="aae:aq_257"/>
<dbReference type="eggNOG" id="COG2265">
    <property type="taxonomic scope" value="Bacteria"/>
</dbReference>
<dbReference type="HOGENOM" id="CLU_014689_7_0_0"/>
<dbReference type="InParanoid" id="O66617"/>
<dbReference type="OrthoDB" id="9804590at2"/>
<dbReference type="Proteomes" id="UP000000798">
    <property type="component" value="Chromosome"/>
</dbReference>
<dbReference type="GO" id="GO:0051539">
    <property type="term" value="F:4 iron, 4 sulfur cluster binding"/>
    <property type="evidence" value="ECO:0007669"/>
    <property type="project" value="UniProtKB-KW"/>
</dbReference>
<dbReference type="GO" id="GO:0046872">
    <property type="term" value="F:metal ion binding"/>
    <property type="evidence" value="ECO:0007669"/>
    <property type="project" value="UniProtKB-KW"/>
</dbReference>
<dbReference type="GO" id="GO:0070041">
    <property type="term" value="F:rRNA (uridine-C5-)-methyltransferase activity"/>
    <property type="evidence" value="ECO:0000318"/>
    <property type="project" value="GO_Central"/>
</dbReference>
<dbReference type="GO" id="GO:0070475">
    <property type="term" value="P:rRNA base methylation"/>
    <property type="evidence" value="ECO:0000318"/>
    <property type="project" value="GO_Central"/>
</dbReference>
<dbReference type="CDD" id="cd02440">
    <property type="entry name" value="AdoMet_MTases"/>
    <property type="match status" value="1"/>
</dbReference>
<dbReference type="FunFam" id="2.40.50.140:FF:000097">
    <property type="entry name" value="23S rRNA (uracil(1939)-C(5))-methyltransferase RlmD"/>
    <property type="match status" value="1"/>
</dbReference>
<dbReference type="Gene3D" id="2.40.50.1070">
    <property type="match status" value="1"/>
</dbReference>
<dbReference type="Gene3D" id="2.40.50.140">
    <property type="entry name" value="Nucleic acid-binding proteins"/>
    <property type="match status" value="1"/>
</dbReference>
<dbReference type="Gene3D" id="3.40.50.150">
    <property type="entry name" value="Vaccinia Virus protein VP39"/>
    <property type="match status" value="1"/>
</dbReference>
<dbReference type="InterPro" id="IPR030390">
    <property type="entry name" value="MeTrfase_TrmA_AS"/>
</dbReference>
<dbReference type="InterPro" id="IPR030391">
    <property type="entry name" value="MeTrfase_TrmA_CS"/>
</dbReference>
<dbReference type="InterPro" id="IPR012340">
    <property type="entry name" value="NA-bd_OB-fold"/>
</dbReference>
<dbReference type="InterPro" id="IPR029063">
    <property type="entry name" value="SAM-dependent_MTases_sf"/>
</dbReference>
<dbReference type="InterPro" id="IPR002792">
    <property type="entry name" value="TRAM_dom"/>
</dbReference>
<dbReference type="InterPro" id="IPR010280">
    <property type="entry name" value="U5_MeTrfase_fam"/>
</dbReference>
<dbReference type="PANTHER" id="PTHR11061">
    <property type="entry name" value="RNA M5U METHYLTRANSFERASE"/>
    <property type="match status" value="1"/>
</dbReference>
<dbReference type="PANTHER" id="PTHR11061:SF30">
    <property type="entry name" value="TRNA (URACIL(54)-C(5))-METHYLTRANSFERASE"/>
    <property type="match status" value="1"/>
</dbReference>
<dbReference type="Pfam" id="PF05958">
    <property type="entry name" value="tRNA_U5-meth_tr"/>
    <property type="match status" value="1"/>
</dbReference>
<dbReference type="SUPFAM" id="SSF50249">
    <property type="entry name" value="Nucleic acid-binding proteins"/>
    <property type="match status" value="1"/>
</dbReference>
<dbReference type="SUPFAM" id="SSF53335">
    <property type="entry name" value="S-adenosyl-L-methionine-dependent methyltransferases"/>
    <property type="match status" value="1"/>
</dbReference>
<dbReference type="PROSITE" id="PS51687">
    <property type="entry name" value="SAM_MT_RNA_M5U"/>
    <property type="match status" value="1"/>
</dbReference>
<dbReference type="PROSITE" id="PS50926">
    <property type="entry name" value="TRAM"/>
    <property type="match status" value="1"/>
</dbReference>
<dbReference type="PROSITE" id="PS01230">
    <property type="entry name" value="TRMA_1"/>
    <property type="match status" value="1"/>
</dbReference>
<dbReference type="PROSITE" id="PS01231">
    <property type="entry name" value="TRMA_2"/>
    <property type="match status" value="1"/>
</dbReference>
<accession>O66617</accession>
<keyword id="KW-0004">4Fe-4S</keyword>
<keyword id="KW-0408">Iron</keyword>
<keyword id="KW-0411">Iron-sulfur</keyword>
<keyword id="KW-0479">Metal-binding</keyword>
<keyword id="KW-0489">Methyltransferase</keyword>
<keyword id="KW-1185">Reference proteome</keyword>
<keyword id="KW-0949">S-adenosyl-L-methionine</keyword>
<keyword id="KW-0808">Transferase</keyword>
<organism>
    <name type="scientific">Aquifex aeolicus (strain VF5)</name>
    <dbReference type="NCBI Taxonomy" id="224324"/>
    <lineage>
        <taxon>Bacteria</taxon>
        <taxon>Pseudomonadati</taxon>
        <taxon>Aquificota</taxon>
        <taxon>Aquificia</taxon>
        <taxon>Aquificales</taxon>
        <taxon>Aquificaceae</taxon>
        <taxon>Aquifex</taxon>
    </lineage>
</organism>
<sequence length="425" mass="49137">MKDKPLKLTVEKLVYGGYGFSRLNGKAVFVRFASPKELVEAKVVKEKKDYTEAVVTKVLISSPARRKAPCPYYGECGGCQIQHLNYEEQLRSKKDILLESLERIGKIKEVPYEGEIPSKKEFNYRVRVQFKIQENRVGFYRWDVKEVVDVEECLLAHERINELIPHIREVLKVIKDLQEVHVNYSPTRDEATLKFVTITHTDEKLLQNILENVLPEWVVGIGDYGKVGNSLVKRYKVGREHIFMDVGKWQYRVSNDSFFQVNYTLWEDFLKEVLDFSESYKKGLDLHCGVGFFTIPLSEQGNFIEGADANPSAIKDAEYNAKINNRDNVIFEEATAFKHLKRRIGEVINLVVVDPPRSGLLREERDLLLKNKPDKIVYISCNPTTFARDLKILTKGGYELKRLKLIDNFPQTYHIESIALLEVKD</sequence>